<comment type="function">
    <text evidence="1">Acts as a component of the essential kinetochore-associated NDC80 complex, which is required for chromosome segregation and spindle checkpoint activity.</text>
</comment>
<comment type="subunit">
    <text evidence="1">Component of the NDC80 complex, which consists of NDC80, NUF2, SPC24 and SPC25.</text>
</comment>
<comment type="subcellular location">
    <subcellularLocation>
        <location evidence="1">Nucleus</location>
    </subcellularLocation>
    <subcellularLocation>
        <location evidence="1">Chromosome</location>
        <location evidence="1">Centromere</location>
        <location evidence="1">Kinetochore</location>
    </subcellularLocation>
    <text evidence="1">Associated with kinetochores.</text>
</comment>
<comment type="similarity">
    <text evidence="4">Belongs to the NDC80/HEC1 family.</text>
</comment>
<organism>
    <name type="scientific">Candida glabrata (strain ATCC 2001 / BCRC 20586 / JCM 3761 / NBRC 0622 / NRRL Y-65 / CBS 138)</name>
    <name type="common">Yeast</name>
    <name type="synonym">Nakaseomyces glabratus</name>
    <dbReference type="NCBI Taxonomy" id="284593"/>
    <lineage>
        <taxon>Eukaryota</taxon>
        <taxon>Fungi</taxon>
        <taxon>Dikarya</taxon>
        <taxon>Ascomycota</taxon>
        <taxon>Saccharomycotina</taxon>
        <taxon>Saccharomycetes</taxon>
        <taxon>Saccharomycetales</taxon>
        <taxon>Saccharomycetaceae</taxon>
        <taxon>Nakaseomyces</taxon>
    </lineage>
</organism>
<keyword id="KW-0131">Cell cycle</keyword>
<keyword id="KW-0132">Cell division</keyword>
<keyword id="KW-0137">Centromere</keyword>
<keyword id="KW-0158">Chromosome</keyword>
<keyword id="KW-0175">Coiled coil</keyword>
<keyword id="KW-0995">Kinetochore</keyword>
<keyword id="KW-0498">Mitosis</keyword>
<keyword id="KW-0539">Nucleus</keyword>
<keyword id="KW-1185">Reference proteome</keyword>
<name>NDC80_CANGA</name>
<reference key="1">
    <citation type="journal article" date="2004" name="Nature">
        <title>Genome evolution in yeasts.</title>
        <authorList>
            <person name="Dujon B."/>
            <person name="Sherman D."/>
            <person name="Fischer G."/>
            <person name="Durrens P."/>
            <person name="Casaregola S."/>
            <person name="Lafontaine I."/>
            <person name="de Montigny J."/>
            <person name="Marck C."/>
            <person name="Neuveglise C."/>
            <person name="Talla E."/>
            <person name="Goffard N."/>
            <person name="Frangeul L."/>
            <person name="Aigle M."/>
            <person name="Anthouard V."/>
            <person name="Babour A."/>
            <person name="Barbe V."/>
            <person name="Barnay S."/>
            <person name="Blanchin S."/>
            <person name="Beckerich J.-M."/>
            <person name="Beyne E."/>
            <person name="Bleykasten C."/>
            <person name="Boisrame A."/>
            <person name="Boyer J."/>
            <person name="Cattolico L."/>
            <person name="Confanioleri F."/>
            <person name="de Daruvar A."/>
            <person name="Despons L."/>
            <person name="Fabre E."/>
            <person name="Fairhead C."/>
            <person name="Ferry-Dumazet H."/>
            <person name="Groppi A."/>
            <person name="Hantraye F."/>
            <person name="Hennequin C."/>
            <person name="Jauniaux N."/>
            <person name="Joyet P."/>
            <person name="Kachouri R."/>
            <person name="Kerrest A."/>
            <person name="Koszul R."/>
            <person name="Lemaire M."/>
            <person name="Lesur I."/>
            <person name="Ma L."/>
            <person name="Muller H."/>
            <person name="Nicaud J.-M."/>
            <person name="Nikolski M."/>
            <person name="Oztas S."/>
            <person name="Ozier-Kalogeropoulos O."/>
            <person name="Pellenz S."/>
            <person name="Potier S."/>
            <person name="Richard G.-F."/>
            <person name="Straub M.-L."/>
            <person name="Suleau A."/>
            <person name="Swennen D."/>
            <person name="Tekaia F."/>
            <person name="Wesolowski-Louvel M."/>
            <person name="Westhof E."/>
            <person name="Wirth B."/>
            <person name="Zeniou-Meyer M."/>
            <person name="Zivanovic Y."/>
            <person name="Bolotin-Fukuhara M."/>
            <person name="Thierry A."/>
            <person name="Bouchier C."/>
            <person name="Caudron B."/>
            <person name="Scarpelli C."/>
            <person name="Gaillardin C."/>
            <person name="Weissenbach J."/>
            <person name="Wincker P."/>
            <person name="Souciet J.-L."/>
        </authorList>
    </citation>
    <scope>NUCLEOTIDE SEQUENCE [LARGE SCALE GENOMIC DNA]</scope>
    <source>
        <strain>ATCC 2001 / BCRC 20586 / JCM 3761 / NBRC 0622 / NRRL Y-65 / CBS 138</strain>
    </source>
</reference>
<gene>
    <name type="primary">NDC80</name>
    <name type="ordered locus">CAGL0D02684g</name>
</gene>
<feature type="chain" id="PRO_0000246635" description="Probable kinetochore protein NDC80">
    <location>
        <begin position="1"/>
        <end position="706"/>
    </location>
</feature>
<feature type="region of interest" description="Disordered" evidence="3">
    <location>
        <begin position="1"/>
        <end position="70"/>
    </location>
</feature>
<feature type="coiled-coil region" evidence="2">
    <location>
        <begin position="402"/>
        <end position="472"/>
    </location>
</feature>
<feature type="coiled-coil region" evidence="2">
    <location>
        <begin position="553"/>
        <end position="669"/>
    </location>
</feature>
<feature type="compositionally biased region" description="Polar residues" evidence="3">
    <location>
        <begin position="18"/>
        <end position="32"/>
    </location>
</feature>
<feature type="compositionally biased region" description="Low complexity" evidence="3">
    <location>
        <begin position="38"/>
        <end position="49"/>
    </location>
</feature>
<feature type="compositionally biased region" description="Polar residues" evidence="3">
    <location>
        <begin position="50"/>
        <end position="66"/>
    </location>
</feature>
<evidence type="ECO:0000250" key="1"/>
<evidence type="ECO:0000255" key="2"/>
<evidence type="ECO:0000256" key="3">
    <source>
        <dbReference type="SAM" id="MobiDB-lite"/>
    </source>
</evidence>
<evidence type="ECO:0000305" key="4"/>
<sequence length="706" mass="81821">MPNEQSEASVLSRLNPHRFTTQIPQHPLSQNMQRRRNSVSSAASDSINSLKQSSARAVSNSNGIQKNNKKYMRSTVAGASGILPTYNKSMSFSQNKNLDDNNMRASLPVLERDLNANNFKSANNNPIGFSSFSQPYSGSRDPRPLRDKNFQSAIQQEIFDYLIQNTFEIDTNYPISLKTLKQPTQKSFVTIFKWLYLRLDPGYTFTKSIEYEVYQLLKILQYPYLESINKSQISAVGGSGWPKFLGMLHWLVTINLRLDKCLNTLDQNLLNQQTQDLTTLSKPVENIEDQEVRQEKYELMAERLFIDYITDSYKTFLNLKDDYSDHMNELKAGFERYLHIIKLDVNNIQSKNENMFEKFEISRNRVEKLKVARGKSTALNGDLVKFQKYVDSMKAKSEEWPIKLSKIEDELNEKKENIKLITEEISQIQDSLQRKGLSVEQIENKNEQKLQLEKEIDQIAEKADEFVSLIKSTKVDNEKVFVTFQDSIRQYNDLLLEFLTSRRKLGHDIEIEPLKITLPNEVVVPNSENALTMDKLFPTDHPMPEYYQNMLLSINSDIMKRIETLKTDNQELEREIGMLTEEINSRGSTNESLELKLSDLNLNLKNVRQENRAEILAQSLEIEKLERQITEGNKNIEQKIANAERIVTELLNEKEVLYNEHSKFKSDLNLKIQKLIKEAHSLRFAVKDSTNRLNELIFTESSETDD</sequence>
<dbReference type="EMBL" id="CR380950">
    <property type="protein sequence ID" value="CAG58443.1"/>
    <property type="molecule type" value="Genomic_DNA"/>
</dbReference>
<dbReference type="RefSeq" id="XP_445532.1">
    <property type="nucleotide sequence ID" value="XM_445532.1"/>
</dbReference>
<dbReference type="SMR" id="Q6FW62"/>
<dbReference type="FunCoup" id="Q6FW62">
    <property type="interactions" value="350"/>
</dbReference>
<dbReference type="STRING" id="284593.Q6FW62"/>
<dbReference type="EnsemblFungi" id="CAGL0D02684g-T">
    <property type="protein sequence ID" value="CAGL0D02684g-T-p1"/>
    <property type="gene ID" value="CAGL0D02684g"/>
</dbReference>
<dbReference type="KEGG" id="cgr:2887182"/>
<dbReference type="CGD" id="CAL0128305">
    <property type="gene designation" value="CAGL0D02684g"/>
</dbReference>
<dbReference type="VEuPathDB" id="FungiDB:CAGL0D02684g"/>
<dbReference type="eggNOG" id="KOG0995">
    <property type="taxonomic scope" value="Eukaryota"/>
</dbReference>
<dbReference type="HOGENOM" id="CLU_012583_1_2_1"/>
<dbReference type="InParanoid" id="Q6FW62"/>
<dbReference type="OMA" id="PSHKFQK"/>
<dbReference type="Proteomes" id="UP000002428">
    <property type="component" value="Chromosome D"/>
</dbReference>
<dbReference type="GO" id="GO:0031262">
    <property type="term" value="C:Ndc80 complex"/>
    <property type="evidence" value="ECO:0000250"/>
    <property type="project" value="UniProtKB"/>
</dbReference>
<dbReference type="GO" id="GO:0005634">
    <property type="term" value="C:nucleus"/>
    <property type="evidence" value="ECO:0007669"/>
    <property type="project" value="UniProtKB-SubCell"/>
</dbReference>
<dbReference type="GO" id="GO:0042802">
    <property type="term" value="F:identical protein binding"/>
    <property type="evidence" value="ECO:0007669"/>
    <property type="project" value="EnsemblFungi"/>
</dbReference>
<dbReference type="GO" id="GO:0008017">
    <property type="term" value="F:microtubule binding"/>
    <property type="evidence" value="ECO:0000250"/>
    <property type="project" value="UniProtKB"/>
</dbReference>
<dbReference type="GO" id="GO:0051301">
    <property type="term" value="P:cell division"/>
    <property type="evidence" value="ECO:0007669"/>
    <property type="project" value="UniProtKB-KW"/>
</dbReference>
<dbReference type="GO" id="GO:1990758">
    <property type="term" value="P:mitotic sister chromatid biorientation"/>
    <property type="evidence" value="ECO:0000250"/>
    <property type="project" value="UniProtKB"/>
</dbReference>
<dbReference type="GO" id="GO:0034501">
    <property type="term" value="P:protein localization to kinetochore"/>
    <property type="evidence" value="ECO:0007669"/>
    <property type="project" value="EnsemblFungi"/>
</dbReference>
<dbReference type="FunFam" id="1.10.418.30:FF:000001">
    <property type="entry name" value="Probable kinetochore protein ndc80"/>
    <property type="match status" value="1"/>
</dbReference>
<dbReference type="Gene3D" id="1.10.418.30">
    <property type="entry name" value="Ncd80 complex, Ncd80 subunit"/>
    <property type="match status" value="1"/>
</dbReference>
<dbReference type="InterPro" id="IPR040967">
    <property type="entry name" value="DUF5595"/>
</dbReference>
<dbReference type="InterPro" id="IPR005550">
    <property type="entry name" value="Kinetochore_Ndc80"/>
</dbReference>
<dbReference type="InterPro" id="IPR055260">
    <property type="entry name" value="Ndc80_CH"/>
</dbReference>
<dbReference type="InterPro" id="IPR038273">
    <property type="entry name" value="Ndc80_sf"/>
</dbReference>
<dbReference type="PANTHER" id="PTHR10643">
    <property type="entry name" value="KINETOCHORE PROTEIN NDC80"/>
    <property type="match status" value="1"/>
</dbReference>
<dbReference type="PANTHER" id="PTHR10643:SF2">
    <property type="entry name" value="KINETOCHORE PROTEIN NDC80 HOMOLOG"/>
    <property type="match status" value="1"/>
</dbReference>
<dbReference type="Pfam" id="PF18077">
    <property type="entry name" value="DUF5595"/>
    <property type="match status" value="1"/>
</dbReference>
<dbReference type="Pfam" id="PF03801">
    <property type="entry name" value="Ndc80_HEC"/>
    <property type="match status" value="1"/>
</dbReference>
<protein>
    <recommendedName>
        <fullName>Probable kinetochore protein NDC80</fullName>
    </recommendedName>
</protein>
<proteinExistence type="inferred from homology"/>
<accession>Q6FW62</accession>